<accession>Q9U968</accession>
<keyword id="KW-0085">Behavior</keyword>
<keyword id="KW-1015">Disulfide bond</keyword>
<keyword id="KW-0325">Glycoprotein</keyword>
<keyword id="KW-0430">Lectin</keyword>
<keyword id="KW-0964">Secreted</keyword>
<keyword id="KW-0732">Signal</keyword>
<evidence type="ECO:0000255" key="1"/>
<evidence type="ECO:0000255" key="2">
    <source>
        <dbReference type="PROSITE-ProRule" id="PRU00040"/>
    </source>
</evidence>
<evidence type="ECO:0000305" key="3"/>
<reference key="1">
    <citation type="journal article" date="1999" name="Genetics">
        <title>Positive selection drives the evolution of the Acp29AB accessory gland protein in Drosophila.</title>
        <authorList>
            <person name="Aguade M."/>
        </authorList>
    </citation>
    <scope>NUCLEOTIDE SEQUENCE [GENOMIC DNA]</scope>
    <source>
        <strain>S9</strain>
    </source>
</reference>
<comment type="function">
    <text>Responsible for physiological and behavioral changes in mated female flies.</text>
</comment>
<comment type="subcellular location">
    <subcellularLocation>
        <location evidence="3">Secreted</location>
    </subcellularLocation>
</comment>
<organism>
    <name type="scientific">Drosophila simulans</name>
    <name type="common">Fruit fly</name>
    <dbReference type="NCBI Taxonomy" id="7240"/>
    <lineage>
        <taxon>Eukaryota</taxon>
        <taxon>Metazoa</taxon>
        <taxon>Ecdysozoa</taxon>
        <taxon>Arthropoda</taxon>
        <taxon>Hexapoda</taxon>
        <taxon>Insecta</taxon>
        <taxon>Pterygota</taxon>
        <taxon>Neoptera</taxon>
        <taxon>Endopterygota</taxon>
        <taxon>Diptera</taxon>
        <taxon>Brachycera</taxon>
        <taxon>Muscomorpha</taxon>
        <taxon>Ephydroidea</taxon>
        <taxon>Drosophilidae</taxon>
        <taxon>Drosophila</taxon>
        <taxon>Sophophora</taxon>
    </lineage>
</organism>
<dbReference type="EMBL" id="AJ240552">
    <property type="protein sequence ID" value="CAB53227.1"/>
    <property type="molecule type" value="Genomic_DNA"/>
</dbReference>
<dbReference type="SMR" id="Q9U968"/>
<dbReference type="GlyCosmos" id="Q9U968">
    <property type="glycosylation" value="4 sites, No reported glycans"/>
</dbReference>
<dbReference type="OrthoDB" id="7357196at2759"/>
<dbReference type="GO" id="GO:0005576">
    <property type="term" value="C:extracellular region"/>
    <property type="evidence" value="ECO:0007669"/>
    <property type="project" value="UniProtKB-SubCell"/>
</dbReference>
<dbReference type="GO" id="GO:0030246">
    <property type="term" value="F:carbohydrate binding"/>
    <property type="evidence" value="ECO:0007669"/>
    <property type="project" value="UniProtKB-KW"/>
</dbReference>
<dbReference type="GO" id="GO:0046693">
    <property type="term" value="P:sperm storage"/>
    <property type="evidence" value="ECO:0007669"/>
    <property type="project" value="EnsemblMetazoa"/>
</dbReference>
<dbReference type="CDD" id="cd00037">
    <property type="entry name" value="CLECT"/>
    <property type="match status" value="1"/>
</dbReference>
<dbReference type="Gene3D" id="3.10.100.10">
    <property type="entry name" value="Mannose-Binding Protein A, subunit A"/>
    <property type="match status" value="1"/>
</dbReference>
<dbReference type="InterPro" id="IPR001304">
    <property type="entry name" value="C-type_lectin-like"/>
</dbReference>
<dbReference type="InterPro" id="IPR016186">
    <property type="entry name" value="C-type_lectin-like/link_sf"/>
</dbReference>
<dbReference type="InterPro" id="IPR016187">
    <property type="entry name" value="CTDL_fold"/>
</dbReference>
<dbReference type="Pfam" id="PF00059">
    <property type="entry name" value="Lectin_C"/>
    <property type="match status" value="1"/>
</dbReference>
<dbReference type="SMART" id="SM00034">
    <property type="entry name" value="CLECT"/>
    <property type="match status" value="1"/>
</dbReference>
<dbReference type="SUPFAM" id="SSF56436">
    <property type="entry name" value="C-type lectin-like"/>
    <property type="match status" value="1"/>
</dbReference>
<dbReference type="PROSITE" id="PS50041">
    <property type="entry name" value="C_TYPE_LECTIN_2"/>
    <property type="match status" value="1"/>
</dbReference>
<feature type="signal peptide" evidence="1">
    <location>
        <begin position="1"/>
        <end position="21"/>
    </location>
</feature>
<feature type="chain" id="PRO_0000017557" description="Accessory gland protein Acp29AB">
    <location>
        <begin position="22"/>
        <end position="234"/>
    </location>
</feature>
<feature type="domain" description="C-type lectin" evidence="2">
    <location>
        <begin position="137"/>
        <end position="234"/>
    </location>
</feature>
<feature type="glycosylation site" description="N-linked (GlcNAc...) asparagine" evidence="1">
    <location>
        <position position="29"/>
    </location>
</feature>
<feature type="glycosylation site" description="N-linked (GlcNAc...) asparagine" evidence="1">
    <location>
        <position position="61"/>
    </location>
</feature>
<feature type="glycosylation site" description="N-linked (GlcNAc...) asparagine" evidence="1">
    <location>
        <position position="127"/>
    </location>
</feature>
<feature type="glycosylation site" description="N-linked (GlcNAc...) asparagine" evidence="1">
    <location>
        <position position="164"/>
    </location>
</feature>
<feature type="disulfide bond" evidence="2">
    <location>
        <begin position="139"/>
        <end position="228"/>
    </location>
</feature>
<feature type="disulfide bond" evidence="2">
    <location>
        <begin position="207"/>
        <end position="220"/>
    </location>
</feature>
<sequence length="234" mass="26915">MYATNLLYLLALWNLWLVSGGQQDIPNGNATLPSPQKPQNTIDQIGANQNYWFTYNALRQNETLAIIDAMESGIASSVLAFQAQMEIQLQPLKIIMLHHAGNIKASNNIKMSRFEKVGSRYFHIEKNLTLTWFEAYVTCREMNGHLANIRDEKELDGILALAPNNSYWVDISKLVEYGGTFVSTLTGREPIFVKWKPNQDKKKQHNCVYIYAKEMYYDECFEKKSFVCQANQWA</sequence>
<protein>
    <recommendedName>
        <fullName>Accessory gland protein Acp29AB</fullName>
    </recommendedName>
</protein>
<proteinExistence type="inferred from homology"/>
<name>A29AB_DROSI</name>
<gene>
    <name type="primary">Acp29AB</name>
</gene>